<name>PSRP_ECTM1</name>
<accession>A4XU29</accession>
<evidence type="ECO:0000255" key="1">
    <source>
        <dbReference type="HAMAP-Rule" id="MF_01062"/>
    </source>
</evidence>
<keyword id="KW-0418">Kinase</keyword>
<keyword id="KW-0547">Nucleotide-binding</keyword>
<keyword id="KW-0723">Serine/threonine-protein kinase</keyword>
<keyword id="KW-0808">Transferase</keyword>
<feature type="chain" id="PRO_1000073005" description="Putative phosphoenolpyruvate synthase regulatory protein">
    <location>
        <begin position="1"/>
        <end position="272"/>
    </location>
</feature>
<feature type="binding site" evidence="1">
    <location>
        <begin position="152"/>
        <end position="159"/>
    </location>
    <ligand>
        <name>ADP</name>
        <dbReference type="ChEBI" id="CHEBI:456216"/>
    </ligand>
</feature>
<proteinExistence type="inferred from homology"/>
<protein>
    <recommendedName>
        <fullName evidence="1">Putative phosphoenolpyruvate synthase regulatory protein</fullName>
        <shortName evidence="1">PEP synthase regulatory protein</shortName>
        <shortName evidence="1">PSRP</shortName>
        <ecNumber evidence="1">2.7.11.33</ecNumber>
        <ecNumber evidence="1">2.7.4.28</ecNumber>
    </recommendedName>
    <alternativeName>
        <fullName evidence="1">Pyruvate, water dikinase regulatory protein</fullName>
    </alternativeName>
</protein>
<gene>
    <name type="ordered locus">Pmen_2084</name>
</gene>
<organism>
    <name type="scientific">Ectopseudomonas mendocina (strain ymp)</name>
    <name type="common">Pseudomonas mendocina</name>
    <dbReference type="NCBI Taxonomy" id="399739"/>
    <lineage>
        <taxon>Bacteria</taxon>
        <taxon>Pseudomonadati</taxon>
        <taxon>Pseudomonadota</taxon>
        <taxon>Gammaproteobacteria</taxon>
        <taxon>Pseudomonadales</taxon>
        <taxon>Pseudomonadaceae</taxon>
        <taxon>Ectopseudomonas</taxon>
    </lineage>
</organism>
<reference key="1">
    <citation type="submission" date="2007-04" db="EMBL/GenBank/DDBJ databases">
        <title>Complete sequence of Pseudomonas mendocina ymp.</title>
        <authorList>
            <consortium name="US DOE Joint Genome Institute"/>
            <person name="Copeland A."/>
            <person name="Lucas S."/>
            <person name="Lapidus A."/>
            <person name="Barry K."/>
            <person name="Glavina del Rio T."/>
            <person name="Dalin E."/>
            <person name="Tice H."/>
            <person name="Pitluck S."/>
            <person name="Kiss H."/>
            <person name="Brettin T."/>
            <person name="Detter J.C."/>
            <person name="Bruce D."/>
            <person name="Han C."/>
            <person name="Schmutz J."/>
            <person name="Larimer F."/>
            <person name="Land M."/>
            <person name="Hauser L."/>
            <person name="Kyrpides N."/>
            <person name="Mikhailova N."/>
            <person name="Hersman L."/>
            <person name="Dubois J."/>
            <person name="Maurice P."/>
            <person name="Richardson P."/>
        </authorList>
    </citation>
    <scope>NUCLEOTIDE SEQUENCE [LARGE SCALE GENOMIC DNA]</scope>
    <source>
        <strain>ymp</strain>
    </source>
</reference>
<sequence length="272" mass="30971">MKRTAFFISDGTGITAETLGQSLLAQFENIQFTKLTRPYIDSIDKARAMVQQIDAAAERDGARPIIFDTIVNRDIRAILDTANGFMIDIFSTFLSPLEQELSSHSSYSVGKSHSIGQHSNYMERIEAVNFALDNDDGARTHYYDKADLILVGVSRCGKTPTCLYMAMQYGIRAANYPLTEDDMERLQLPDSLKKHRDKLFGLTIDPDRLTAIRHERKPNSRYASFAQCEFEVREVENLFRRENIAFINSTHFSVEEISAKILVEKGVERRLK</sequence>
<dbReference type="EC" id="2.7.11.33" evidence="1"/>
<dbReference type="EC" id="2.7.4.28" evidence="1"/>
<dbReference type="EMBL" id="CP000680">
    <property type="protein sequence ID" value="ABP84845.1"/>
    <property type="molecule type" value="Genomic_DNA"/>
</dbReference>
<dbReference type="SMR" id="A4XU29"/>
<dbReference type="STRING" id="399739.Pmen_2084"/>
<dbReference type="KEGG" id="pmy:Pmen_2084"/>
<dbReference type="PATRIC" id="fig|399739.8.peg.2113"/>
<dbReference type="eggNOG" id="COG1806">
    <property type="taxonomic scope" value="Bacteria"/>
</dbReference>
<dbReference type="HOGENOM" id="CLU_046206_1_0_6"/>
<dbReference type="OrthoDB" id="9782201at2"/>
<dbReference type="GO" id="GO:0043531">
    <property type="term" value="F:ADP binding"/>
    <property type="evidence" value="ECO:0007669"/>
    <property type="project" value="UniProtKB-UniRule"/>
</dbReference>
<dbReference type="GO" id="GO:0005524">
    <property type="term" value="F:ATP binding"/>
    <property type="evidence" value="ECO:0007669"/>
    <property type="project" value="InterPro"/>
</dbReference>
<dbReference type="GO" id="GO:0016776">
    <property type="term" value="F:phosphotransferase activity, phosphate group as acceptor"/>
    <property type="evidence" value="ECO:0007669"/>
    <property type="project" value="UniProtKB-UniRule"/>
</dbReference>
<dbReference type="GO" id="GO:0004674">
    <property type="term" value="F:protein serine/threonine kinase activity"/>
    <property type="evidence" value="ECO:0007669"/>
    <property type="project" value="UniProtKB-UniRule"/>
</dbReference>
<dbReference type="HAMAP" id="MF_01062">
    <property type="entry name" value="PSRP"/>
    <property type="match status" value="1"/>
</dbReference>
<dbReference type="InterPro" id="IPR005177">
    <property type="entry name" value="Kinase-pyrophosphorylase"/>
</dbReference>
<dbReference type="InterPro" id="IPR026530">
    <property type="entry name" value="PSRP"/>
</dbReference>
<dbReference type="NCBIfam" id="NF003742">
    <property type="entry name" value="PRK05339.1"/>
    <property type="match status" value="1"/>
</dbReference>
<dbReference type="PANTHER" id="PTHR31756">
    <property type="entry name" value="PYRUVATE, PHOSPHATE DIKINASE REGULATORY PROTEIN 1, CHLOROPLASTIC"/>
    <property type="match status" value="1"/>
</dbReference>
<dbReference type="PANTHER" id="PTHR31756:SF3">
    <property type="entry name" value="PYRUVATE, PHOSPHATE DIKINASE REGULATORY PROTEIN 1, CHLOROPLASTIC"/>
    <property type="match status" value="1"/>
</dbReference>
<dbReference type="Pfam" id="PF03618">
    <property type="entry name" value="Kinase-PPPase"/>
    <property type="match status" value="1"/>
</dbReference>
<comment type="function">
    <text evidence="1">Bifunctional serine/threonine kinase and phosphorylase involved in the regulation of the phosphoenolpyruvate synthase (PEPS) by catalyzing its phosphorylation/dephosphorylation.</text>
</comment>
<comment type="catalytic activity">
    <reaction evidence="1">
        <text>[pyruvate, water dikinase] + ADP = [pyruvate, water dikinase]-phosphate + AMP + H(+)</text>
        <dbReference type="Rhea" id="RHEA:46020"/>
        <dbReference type="Rhea" id="RHEA-COMP:11425"/>
        <dbReference type="Rhea" id="RHEA-COMP:11426"/>
        <dbReference type="ChEBI" id="CHEBI:15378"/>
        <dbReference type="ChEBI" id="CHEBI:43176"/>
        <dbReference type="ChEBI" id="CHEBI:68546"/>
        <dbReference type="ChEBI" id="CHEBI:456215"/>
        <dbReference type="ChEBI" id="CHEBI:456216"/>
        <dbReference type="EC" id="2.7.11.33"/>
    </reaction>
</comment>
<comment type="catalytic activity">
    <reaction evidence="1">
        <text>[pyruvate, water dikinase]-phosphate + phosphate + H(+) = [pyruvate, water dikinase] + diphosphate</text>
        <dbReference type="Rhea" id="RHEA:48580"/>
        <dbReference type="Rhea" id="RHEA-COMP:11425"/>
        <dbReference type="Rhea" id="RHEA-COMP:11426"/>
        <dbReference type="ChEBI" id="CHEBI:15378"/>
        <dbReference type="ChEBI" id="CHEBI:33019"/>
        <dbReference type="ChEBI" id="CHEBI:43176"/>
        <dbReference type="ChEBI" id="CHEBI:43474"/>
        <dbReference type="ChEBI" id="CHEBI:68546"/>
        <dbReference type="EC" id="2.7.4.28"/>
    </reaction>
</comment>
<comment type="similarity">
    <text evidence="1">Belongs to the pyruvate, phosphate/water dikinase regulatory protein family. PSRP subfamily.</text>
</comment>